<keyword id="KW-0458">Lysosome</keyword>
<keyword id="KW-0472">Membrane</keyword>
<keyword id="KW-1185">Reference proteome</keyword>
<keyword id="KW-0677">Repeat</keyword>
<keyword id="KW-0812">Transmembrane</keyword>
<keyword id="KW-1133">Transmembrane helix</keyword>
<proteinExistence type="evidence at transcript level"/>
<organism>
    <name type="scientific">Mus musculus</name>
    <name type="common">Mouse</name>
    <dbReference type="NCBI Taxonomy" id="10090"/>
    <lineage>
        <taxon>Eukaryota</taxon>
        <taxon>Metazoa</taxon>
        <taxon>Chordata</taxon>
        <taxon>Craniata</taxon>
        <taxon>Vertebrata</taxon>
        <taxon>Euteleostomi</taxon>
        <taxon>Mammalia</taxon>
        <taxon>Eutheria</taxon>
        <taxon>Euarchontoglires</taxon>
        <taxon>Glires</taxon>
        <taxon>Rodentia</taxon>
        <taxon>Myomorpha</taxon>
        <taxon>Muroidea</taxon>
        <taxon>Muridae</taxon>
        <taxon>Murinae</taxon>
        <taxon>Mus</taxon>
        <taxon>Mus</taxon>
    </lineage>
</organism>
<accession>P58749</accession>
<accession>Q8BUN7</accession>
<reference key="1">
    <citation type="journal article" date="2005" name="Science">
        <title>The transcriptional landscape of the mammalian genome.</title>
        <authorList>
            <person name="Carninci P."/>
            <person name="Kasukawa T."/>
            <person name="Katayama S."/>
            <person name="Gough J."/>
            <person name="Frith M.C."/>
            <person name="Maeda N."/>
            <person name="Oyama R."/>
            <person name="Ravasi T."/>
            <person name="Lenhard B."/>
            <person name="Wells C."/>
            <person name="Kodzius R."/>
            <person name="Shimokawa K."/>
            <person name="Bajic V.B."/>
            <person name="Brenner S.E."/>
            <person name="Batalov S."/>
            <person name="Forrest A.R."/>
            <person name="Zavolan M."/>
            <person name="Davis M.J."/>
            <person name="Wilming L.G."/>
            <person name="Aidinis V."/>
            <person name="Allen J.E."/>
            <person name="Ambesi-Impiombato A."/>
            <person name="Apweiler R."/>
            <person name="Aturaliya R.N."/>
            <person name="Bailey T.L."/>
            <person name="Bansal M."/>
            <person name="Baxter L."/>
            <person name="Beisel K.W."/>
            <person name="Bersano T."/>
            <person name="Bono H."/>
            <person name="Chalk A.M."/>
            <person name="Chiu K.P."/>
            <person name="Choudhary V."/>
            <person name="Christoffels A."/>
            <person name="Clutterbuck D.R."/>
            <person name="Crowe M.L."/>
            <person name="Dalla E."/>
            <person name="Dalrymple B.P."/>
            <person name="de Bono B."/>
            <person name="Della Gatta G."/>
            <person name="di Bernardo D."/>
            <person name="Down T."/>
            <person name="Engstrom P."/>
            <person name="Fagiolini M."/>
            <person name="Faulkner G."/>
            <person name="Fletcher C.F."/>
            <person name="Fukushima T."/>
            <person name="Furuno M."/>
            <person name="Futaki S."/>
            <person name="Gariboldi M."/>
            <person name="Georgii-Hemming P."/>
            <person name="Gingeras T.R."/>
            <person name="Gojobori T."/>
            <person name="Green R.E."/>
            <person name="Gustincich S."/>
            <person name="Harbers M."/>
            <person name="Hayashi Y."/>
            <person name="Hensch T.K."/>
            <person name="Hirokawa N."/>
            <person name="Hill D."/>
            <person name="Huminiecki L."/>
            <person name="Iacono M."/>
            <person name="Ikeo K."/>
            <person name="Iwama A."/>
            <person name="Ishikawa T."/>
            <person name="Jakt M."/>
            <person name="Kanapin A."/>
            <person name="Katoh M."/>
            <person name="Kawasawa Y."/>
            <person name="Kelso J."/>
            <person name="Kitamura H."/>
            <person name="Kitano H."/>
            <person name="Kollias G."/>
            <person name="Krishnan S.P."/>
            <person name="Kruger A."/>
            <person name="Kummerfeld S.K."/>
            <person name="Kurochkin I.V."/>
            <person name="Lareau L.F."/>
            <person name="Lazarevic D."/>
            <person name="Lipovich L."/>
            <person name="Liu J."/>
            <person name="Liuni S."/>
            <person name="McWilliam S."/>
            <person name="Madan Babu M."/>
            <person name="Madera M."/>
            <person name="Marchionni L."/>
            <person name="Matsuda H."/>
            <person name="Matsuzawa S."/>
            <person name="Miki H."/>
            <person name="Mignone F."/>
            <person name="Miyake S."/>
            <person name="Morris K."/>
            <person name="Mottagui-Tabar S."/>
            <person name="Mulder N."/>
            <person name="Nakano N."/>
            <person name="Nakauchi H."/>
            <person name="Ng P."/>
            <person name="Nilsson R."/>
            <person name="Nishiguchi S."/>
            <person name="Nishikawa S."/>
            <person name="Nori F."/>
            <person name="Ohara O."/>
            <person name="Okazaki Y."/>
            <person name="Orlando V."/>
            <person name="Pang K.C."/>
            <person name="Pavan W.J."/>
            <person name="Pavesi G."/>
            <person name="Pesole G."/>
            <person name="Petrovsky N."/>
            <person name="Piazza S."/>
            <person name="Reed J."/>
            <person name="Reid J.F."/>
            <person name="Ring B.Z."/>
            <person name="Ringwald M."/>
            <person name="Rost B."/>
            <person name="Ruan Y."/>
            <person name="Salzberg S.L."/>
            <person name="Sandelin A."/>
            <person name="Schneider C."/>
            <person name="Schoenbach C."/>
            <person name="Sekiguchi K."/>
            <person name="Semple C.A."/>
            <person name="Seno S."/>
            <person name="Sessa L."/>
            <person name="Sheng Y."/>
            <person name="Shibata Y."/>
            <person name="Shimada H."/>
            <person name="Shimada K."/>
            <person name="Silva D."/>
            <person name="Sinclair B."/>
            <person name="Sperling S."/>
            <person name="Stupka E."/>
            <person name="Sugiura K."/>
            <person name="Sultana R."/>
            <person name="Takenaka Y."/>
            <person name="Taki K."/>
            <person name="Tammoja K."/>
            <person name="Tan S.L."/>
            <person name="Tang S."/>
            <person name="Taylor M.S."/>
            <person name="Tegner J."/>
            <person name="Teichmann S.A."/>
            <person name="Ueda H.R."/>
            <person name="van Nimwegen E."/>
            <person name="Verardo R."/>
            <person name="Wei C.L."/>
            <person name="Yagi K."/>
            <person name="Yamanishi H."/>
            <person name="Zabarovsky E."/>
            <person name="Zhu S."/>
            <person name="Zimmer A."/>
            <person name="Hide W."/>
            <person name="Bult C."/>
            <person name="Grimmond S.M."/>
            <person name="Teasdale R.D."/>
            <person name="Liu E.T."/>
            <person name="Brusic V."/>
            <person name="Quackenbush J."/>
            <person name="Wahlestedt C."/>
            <person name="Mattick J.S."/>
            <person name="Hume D.A."/>
            <person name="Kai C."/>
            <person name="Sasaki D."/>
            <person name="Tomaru Y."/>
            <person name="Fukuda S."/>
            <person name="Kanamori-Katayama M."/>
            <person name="Suzuki M."/>
            <person name="Aoki J."/>
            <person name="Arakawa T."/>
            <person name="Iida J."/>
            <person name="Imamura K."/>
            <person name="Itoh M."/>
            <person name="Kato T."/>
            <person name="Kawaji H."/>
            <person name="Kawagashira N."/>
            <person name="Kawashima T."/>
            <person name="Kojima M."/>
            <person name="Kondo S."/>
            <person name="Konno H."/>
            <person name="Nakano K."/>
            <person name="Ninomiya N."/>
            <person name="Nishio T."/>
            <person name="Okada M."/>
            <person name="Plessy C."/>
            <person name="Shibata K."/>
            <person name="Shiraki T."/>
            <person name="Suzuki S."/>
            <person name="Tagami M."/>
            <person name="Waki K."/>
            <person name="Watahiki A."/>
            <person name="Okamura-Oho Y."/>
            <person name="Suzuki H."/>
            <person name="Kawai J."/>
            <person name="Hayashizaki Y."/>
        </authorList>
    </citation>
    <scope>NUCLEOTIDE SEQUENCE [LARGE SCALE MRNA]</scope>
    <source>
        <strain>C57BL/6J</strain>
        <tissue>Hippocampus</tissue>
    </source>
</reference>
<reference key="2">
    <citation type="journal article" date="2004" name="Genome Res.">
        <title>The status, quality, and expansion of the NIH full-length cDNA project: the Mammalian Gene Collection (MGC).</title>
        <authorList>
            <consortium name="The MGC Project Team"/>
        </authorList>
    </citation>
    <scope>NUCLEOTIDE SEQUENCE [LARGE SCALE MRNA]</scope>
</reference>
<reference key="3">
    <citation type="journal article" date="2015" name="Protoplasma">
        <title>Transmembrane 6 superfamily 1 (Tm6sf1) is a novel lysosomal transmembrane protein.</title>
        <authorList>
            <person name="Tam W.Y."/>
            <person name="Jiang L."/>
            <person name="Kwan K.M."/>
        </authorList>
    </citation>
    <scope>TISSUE SPECIFICITY</scope>
    <scope>SUBCELLULAR LOCATION</scope>
</reference>
<feature type="chain" id="PRO_0000181834" description="Transmembrane 6 superfamily member 1">
    <location>
        <begin position="1"/>
        <end position="370"/>
    </location>
</feature>
<feature type="transmembrane region" description="Helical; Name=1" evidence="2">
    <location>
        <begin position="3"/>
        <end position="23"/>
    </location>
</feature>
<feature type="transmembrane region" description="Helical; Name=2" evidence="2">
    <location>
        <begin position="34"/>
        <end position="54"/>
    </location>
</feature>
<feature type="transmembrane region" description="Helical; Name=3" evidence="2">
    <location>
        <begin position="62"/>
        <end position="82"/>
    </location>
</feature>
<feature type="transmembrane region" description="Helical; Name=4" evidence="2">
    <location>
        <begin position="110"/>
        <end position="130"/>
    </location>
</feature>
<feature type="transmembrane region" description="Helical; Name=5" evidence="2">
    <location>
        <begin position="139"/>
        <end position="159"/>
    </location>
</feature>
<feature type="transmembrane region" description="Helical; Name=6" evidence="2">
    <location>
        <begin position="166"/>
        <end position="186"/>
    </location>
</feature>
<feature type="transmembrane region" description="Helical; Name=7" evidence="2">
    <location>
        <begin position="218"/>
        <end position="238"/>
    </location>
</feature>
<feature type="transmembrane region" description="Helical; Name=8" evidence="2">
    <location>
        <begin position="268"/>
        <end position="288"/>
    </location>
</feature>
<feature type="transmembrane region" description="Helical; Name=9" evidence="2">
    <location>
        <begin position="331"/>
        <end position="351"/>
    </location>
</feature>
<feature type="domain" description="EXPERA 1" evidence="3">
    <location>
        <begin position="60"/>
        <end position="185"/>
    </location>
</feature>
<feature type="domain" description="EXPERA 2" evidence="3">
    <location>
        <begin position="216"/>
        <end position="350"/>
    </location>
</feature>
<feature type="sequence conflict" description="In Ref. 2; AAH23123." evidence="5" ref="2">
    <original>L</original>
    <variation>V</variation>
    <location>
        <position position="222"/>
    </location>
</feature>
<sequence>MSASAATGVFVLSLSAIPVTYIFNHLAAQHDSWTIVGVAALILLLVALLARVLVRRKPPRDPLFYVYAVFGFTSVVNLIIGLEQDGIIDGFMTHYLREGEPYLNTAYGHMICYWDGSVHYLMYLVMVAAIAWEESYRTIGLYWVGSIIMSIVVFVPGNIVGKYGTRICPAFFLSIPYTCLPVWAGFRIYNQPSENYNYPSKVLQEAQAKALLRRPFDLVLVLCLFLATGFCLFRGLIALDCPAELCRLYTQFQEPYLKDPAAYPKIQMLAYMFYSVPYFVIALYGLVVPGCSWMPDITLVHAGGLAQAQFSHIGASLHARTAYVYRVPEEAKIFFLALNIAYGVLPQLLAYRCTYNPEFFLRTKADEKLE</sequence>
<name>TM6S1_MOUSE</name>
<evidence type="ECO:0000250" key="1">
    <source>
        <dbReference type="UniProtKB" id="Q9BZW5"/>
    </source>
</evidence>
<evidence type="ECO:0000255" key="2"/>
<evidence type="ECO:0000255" key="3">
    <source>
        <dbReference type="PROSITE-ProRule" id="PRU01087"/>
    </source>
</evidence>
<evidence type="ECO:0000269" key="4">
    <source>
    </source>
</evidence>
<evidence type="ECO:0000305" key="5"/>
<dbReference type="EMBL" id="AK083132">
    <property type="protein sequence ID" value="BAC38776.1"/>
    <property type="molecule type" value="mRNA"/>
</dbReference>
<dbReference type="EMBL" id="BC023123">
    <property type="protein sequence ID" value="AAH23123.1"/>
    <property type="molecule type" value="mRNA"/>
</dbReference>
<dbReference type="CCDS" id="CCDS21408.1"/>
<dbReference type="RefSeq" id="NP_001278211.1">
    <property type="nucleotide sequence ID" value="NM_001291282.1"/>
</dbReference>
<dbReference type="RefSeq" id="NP_663350.2">
    <property type="nucleotide sequence ID" value="NM_145375.4"/>
</dbReference>
<dbReference type="RefSeq" id="XP_036008450.1">
    <property type="nucleotide sequence ID" value="XM_036152557.1"/>
</dbReference>
<dbReference type="FunCoup" id="P58749">
    <property type="interactions" value="86"/>
</dbReference>
<dbReference type="STRING" id="10090.ENSMUSP00000038017"/>
<dbReference type="PhosphoSitePlus" id="P58749"/>
<dbReference type="PaxDb" id="10090-ENSMUSP00000038017"/>
<dbReference type="ProteomicsDB" id="259564"/>
<dbReference type="Antibodypedia" id="15402">
    <property type="antibodies" value="78 antibodies from 15 providers"/>
</dbReference>
<dbReference type="DNASU" id="107769"/>
<dbReference type="Ensembl" id="ENSMUST00000041890.8">
    <property type="protein sequence ID" value="ENSMUSP00000038017.2"/>
    <property type="gene ID" value="ENSMUSG00000038623.10"/>
</dbReference>
<dbReference type="GeneID" id="107769"/>
<dbReference type="KEGG" id="mmu:107769"/>
<dbReference type="UCSC" id="uc009ico.3">
    <property type="organism name" value="mouse"/>
</dbReference>
<dbReference type="AGR" id="MGI:1933209"/>
<dbReference type="CTD" id="53346"/>
<dbReference type="MGI" id="MGI:1933209">
    <property type="gene designation" value="Tm6sf1"/>
</dbReference>
<dbReference type="VEuPathDB" id="HostDB:ENSMUSG00000038623"/>
<dbReference type="eggNOG" id="ENOG502QRB2">
    <property type="taxonomic scope" value="Eukaryota"/>
</dbReference>
<dbReference type="GeneTree" id="ENSGT00390000012913"/>
<dbReference type="InParanoid" id="P58749"/>
<dbReference type="OMA" id="FFMKPKQ"/>
<dbReference type="OrthoDB" id="8181520at2759"/>
<dbReference type="PhylomeDB" id="P58749"/>
<dbReference type="TreeFam" id="TF333088"/>
<dbReference type="BioGRID-ORCS" id="107769">
    <property type="hits" value="0 hits in 78 CRISPR screens"/>
</dbReference>
<dbReference type="ChiTaRS" id="Tm6sf1">
    <property type="organism name" value="mouse"/>
</dbReference>
<dbReference type="PRO" id="PR:P58749"/>
<dbReference type="Proteomes" id="UP000000589">
    <property type="component" value="Chromosome 7"/>
</dbReference>
<dbReference type="RNAct" id="P58749">
    <property type="molecule type" value="protein"/>
</dbReference>
<dbReference type="Bgee" id="ENSMUSG00000038623">
    <property type="expression patterns" value="Expressed in granulocyte and 228 other cell types or tissues"/>
</dbReference>
<dbReference type="ExpressionAtlas" id="P58749">
    <property type="expression patterns" value="baseline and differential"/>
</dbReference>
<dbReference type="GO" id="GO:0005765">
    <property type="term" value="C:lysosomal membrane"/>
    <property type="evidence" value="ECO:0000314"/>
    <property type="project" value="UniProtKB"/>
</dbReference>
<dbReference type="CDD" id="cd21106">
    <property type="entry name" value="TM6SF1-like"/>
    <property type="match status" value="1"/>
</dbReference>
<dbReference type="InterPro" id="IPR033118">
    <property type="entry name" value="EXPERA"/>
</dbReference>
<dbReference type="InterPro" id="IPR047195">
    <property type="entry name" value="TM6SF1-like"/>
</dbReference>
<dbReference type="PANTHER" id="PTHR14568:SF10">
    <property type="entry name" value="TRANSMEMBRANE 6 SUPERFAMILY MEMBER 1"/>
    <property type="match status" value="1"/>
</dbReference>
<dbReference type="PANTHER" id="PTHR14568">
    <property type="entry name" value="TRANSMEMBRANE SUPERFAMILY 6 MEMBER 1/2"/>
    <property type="match status" value="1"/>
</dbReference>
<dbReference type="Pfam" id="PF05241">
    <property type="entry name" value="EBP"/>
    <property type="match status" value="1"/>
</dbReference>
<dbReference type="PROSITE" id="PS51751">
    <property type="entry name" value="EXPERA"/>
    <property type="match status" value="2"/>
</dbReference>
<comment type="function">
    <text evidence="1">May function as sterol isomerase.</text>
</comment>
<comment type="subcellular location">
    <subcellularLocation>
        <location evidence="4">Lysosome membrane</location>
        <topology evidence="5">Multi-pass membrane protein</topology>
    </subcellularLocation>
</comment>
<comment type="tissue specificity">
    <text evidence="4">Broad expression.</text>
</comment>
<comment type="similarity">
    <text evidence="5">Belongs to the TM6SF family.</text>
</comment>
<protein>
    <recommendedName>
        <fullName>Transmembrane 6 superfamily member 1</fullName>
    </recommendedName>
</protein>
<gene>
    <name type="primary">Tm6sf1</name>
</gene>